<protein>
    <recommendedName>
        <fullName evidence="1">Octanoyltransferase</fullName>
        <ecNumber evidence="1">2.3.1.181</ecNumber>
    </recommendedName>
    <alternativeName>
        <fullName evidence="1">Lipoate-protein ligase B</fullName>
    </alternativeName>
    <alternativeName>
        <fullName evidence="1">Lipoyl/octanoyl transferase</fullName>
    </alternativeName>
    <alternativeName>
        <fullName evidence="1">Octanoyl-[acyl-carrier-protein]-protein N-octanoyltransferase</fullName>
    </alternativeName>
</protein>
<name>LIPB_PSEPW</name>
<comment type="function">
    <text evidence="1">Catalyzes the transfer of endogenously produced octanoic acid from octanoyl-acyl-carrier-protein onto the lipoyl domains of lipoate-dependent enzymes. Lipoyl-ACP can also act as a substrate although octanoyl-ACP is likely to be the physiological substrate.</text>
</comment>
<comment type="catalytic activity">
    <reaction evidence="1">
        <text>octanoyl-[ACP] + L-lysyl-[protein] = N(6)-octanoyl-L-lysyl-[protein] + holo-[ACP] + H(+)</text>
        <dbReference type="Rhea" id="RHEA:17665"/>
        <dbReference type="Rhea" id="RHEA-COMP:9636"/>
        <dbReference type="Rhea" id="RHEA-COMP:9685"/>
        <dbReference type="Rhea" id="RHEA-COMP:9752"/>
        <dbReference type="Rhea" id="RHEA-COMP:9928"/>
        <dbReference type="ChEBI" id="CHEBI:15378"/>
        <dbReference type="ChEBI" id="CHEBI:29969"/>
        <dbReference type="ChEBI" id="CHEBI:64479"/>
        <dbReference type="ChEBI" id="CHEBI:78463"/>
        <dbReference type="ChEBI" id="CHEBI:78809"/>
        <dbReference type="EC" id="2.3.1.181"/>
    </reaction>
</comment>
<comment type="pathway">
    <text evidence="1">Protein modification; protein lipoylation via endogenous pathway; protein N(6)-(lipoyl)lysine from octanoyl-[acyl-carrier-protein]: step 1/2.</text>
</comment>
<comment type="subcellular location">
    <subcellularLocation>
        <location evidence="1">Cytoplasm</location>
    </subcellularLocation>
</comment>
<comment type="miscellaneous">
    <text evidence="1">In the reaction, the free carboxyl group of octanoic acid is attached via an amide linkage to the epsilon-amino group of a specific lysine residue of lipoyl domains of lipoate-dependent enzymes.</text>
</comment>
<comment type="similarity">
    <text evidence="1">Belongs to the LipB family.</text>
</comment>
<organism>
    <name type="scientific">Pseudomonas putida (strain W619)</name>
    <dbReference type="NCBI Taxonomy" id="390235"/>
    <lineage>
        <taxon>Bacteria</taxon>
        <taxon>Pseudomonadati</taxon>
        <taxon>Pseudomonadota</taxon>
        <taxon>Gammaproteobacteria</taxon>
        <taxon>Pseudomonadales</taxon>
        <taxon>Pseudomonadaceae</taxon>
        <taxon>Pseudomonas</taxon>
    </lineage>
</organism>
<proteinExistence type="inferred from homology"/>
<gene>
    <name evidence="1" type="primary">lipB</name>
    <name type="ordered locus">PputW619_0620</name>
</gene>
<feature type="chain" id="PRO_1000089472" description="Octanoyltransferase">
    <location>
        <begin position="1"/>
        <end position="215"/>
    </location>
</feature>
<feature type="domain" description="BPL/LPL catalytic" evidence="2">
    <location>
        <begin position="31"/>
        <end position="206"/>
    </location>
</feature>
<feature type="active site" description="Acyl-thioester intermediate" evidence="1">
    <location>
        <position position="168"/>
    </location>
</feature>
<feature type="binding site" evidence="1">
    <location>
        <begin position="70"/>
        <end position="77"/>
    </location>
    <ligand>
        <name>substrate</name>
    </ligand>
</feature>
<feature type="binding site" evidence="1">
    <location>
        <begin position="137"/>
        <end position="139"/>
    </location>
    <ligand>
        <name>substrate</name>
    </ligand>
</feature>
<feature type="binding site" evidence="1">
    <location>
        <begin position="150"/>
        <end position="152"/>
    </location>
    <ligand>
        <name>substrate</name>
    </ligand>
</feature>
<feature type="site" description="Lowers pKa of active site Cys" evidence="1">
    <location>
        <position position="134"/>
    </location>
</feature>
<evidence type="ECO:0000255" key="1">
    <source>
        <dbReference type="HAMAP-Rule" id="MF_00013"/>
    </source>
</evidence>
<evidence type="ECO:0000255" key="2">
    <source>
        <dbReference type="PROSITE-ProRule" id="PRU01067"/>
    </source>
</evidence>
<reference key="1">
    <citation type="submission" date="2008-02" db="EMBL/GenBank/DDBJ databases">
        <title>Complete sequence of Pseudomonas putida W619.</title>
        <authorList>
            <person name="Copeland A."/>
            <person name="Lucas S."/>
            <person name="Lapidus A."/>
            <person name="Barry K."/>
            <person name="Detter J.C."/>
            <person name="Glavina del Rio T."/>
            <person name="Dalin E."/>
            <person name="Tice H."/>
            <person name="Pitluck S."/>
            <person name="Chain P."/>
            <person name="Malfatti S."/>
            <person name="Shin M."/>
            <person name="Vergez L."/>
            <person name="Schmutz J."/>
            <person name="Larimer F."/>
            <person name="Land M."/>
            <person name="Hauser L."/>
            <person name="Kyrpides N."/>
            <person name="Kim E."/>
            <person name="Taghavi S."/>
            <person name="Vangronsveld D."/>
            <person name="van der Lelie D."/>
            <person name="Richardson P."/>
        </authorList>
    </citation>
    <scope>NUCLEOTIDE SEQUENCE [LARGE SCALE GENOMIC DNA]</scope>
    <source>
        <strain>W619</strain>
    </source>
</reference>
<dbReference type="EC" id="2.3.1.181" evidence="1"/>
<dbReference type="EMBL" id="CP000949">
    <property type="protein sequence ID" value="ACA71125.1"/>
    <property type="molecule type" value="Genomic_DNA"/>
</dbReference>
<dbReference type="SMR" id="B1J143"/>
<dbReference type="STRING" id="390235.PputW619_0620"/>
<dbReference type="KEGG" id="ppw:PputW619_0620"/>
<dbReference type="eggNOG" id="COG0321">
    <property type="taxonomic scope" value="Bacteria"/>
</dbReference>
<dbReference type="HOGENOM" id="CLU_035168_3_1_6"/>
<dbReference type="OrthoDB" id="9787061at2"/>
<dbReference type="UniPathway" id="UPA00538">
    <property type="reaction ID" value="UER00592"/>
</dbReference>
<dbReference type="GO" id="GO:0005737">
    <property type="term" value="C:cytoplasm"/>
    <property type="evidence" value="ECO:0007669"/>
    <property type="project" value="UniProtKB-SubCell"/>
</dbReference>
<dbReference type="GO" id="GO:0033819">
    <property type="term" value="F:lipoyl(octanoyl) transferase activity"/>
    <property type="evidence" value="ECO:0007669"/>
    <property type="project" value="UniProtKB-EC"/>
</dbReference>
<dbReference type="GO" id="GO:0036211">
    <property type="term" value="P:protein modification process"/>
    <property type="evidence" value="ECO:0007669"/>
    <property type="project" value="InterPro"/>
</dbReference>
<dbReference type="CDD" id="cd16444">
    <property type="entry name" value="LipB"/>
    <property type="match status" value="1"/>
</dbReference>
<dbReference type="FunFam" id="3.30.930.10:FF:000020">
    <property type="entry name" value="Octanoyltransferase"/>
    <property type="match status" value="1"/>
</dbReference>
<dbReference type="Gene3D" id="3.30.930.10">
    <property type="entry name" value="Bira Bifunctional Protein, Domain 2"/>
    <property type="match status" value="1"/>
</dbReference>
<dbReference type="HAMAP" id="MF_00013">
    <property type="entry name" value="LipB"/>
    <property type="match status" value="1"/>
</dbReference>
<dbReference type="InterPro" id="IPR045864">
    <property type="entry name" value="aa-tRNA-synth_II/BPL/LPL"/>
</dbReference>
<dbReference type="InterPro" id="IPR004143">
    <property type="entry name" value="BPL_LPL_catalytic"/>
</dbReference>
<dbReference type="InterPro" id="IPR000544">
    <property type="entry name" value="Octanoyltransferase"/>
</dbReference>
<dbReference type="InterPro" id="IPR020605">
    <property type="entry name" value="Octanoyltransferase_CS"/>
</dbReference>
<dbReference type="NCBIfam" id="TIGR00214">
    <property type="entry name" value="lipB"/>
    <property type="match status" value="1"/>
</dbReference>
<dbReference type="NCBIfam" id="NF010922">
    <property type="entry name" value="PRK14342.1"/>
    <property type="match status" value="1"/>
</dbReference>
<dbReference type="PANTHER" id="PTHR10993:SF7">
    <property type="entry name" value="LIPOYLTRANSFERASE 2, MITOCHONDRIAL-RELATED"/>
    <property type="match status" value="1"/>
</dbReference>
<dbReference type="PANTHER" id="PTHR10993">
    <property type="entry name" value="OCTANOYLTRANSFERASE"/>
    <property type="match status" value="1"/>
</dbReference>
<dbReference type="Pfam" id="PF21948">
    <property type="entry name" value="LplA-B_cat"/>
    <property type="match status" value="1"/>
</dbReference>
<dbReference type="PIRSF" id="PIRSF016262">
    <property type="entry name" value="LPLase"/>
    <property type="match status" value="1"/>
</dbReference>
<dbReference type="SUPFAM" id="SSF55681">
    <property type="entry name" value="Class II aaRS and biotin synthetases"/>
    <property type="match status" value="1"/>
</dbReference>
<dbReference type="PROSITE" id="PS51733">
    <property type="entry name" value="BPL_LPL_CATALYTIC"/>
    <property type="match status" value="1"/>
</dbReference>
<dbReference type="PROSITE" id="PS01313">
    <property type="entry name" value="LIPB"/>
    <property type="match status" value="1"/>
</dbReference>
<accession>B1J143</accession>
<sequence>MSLCLGFRELGLQPYEPVLEAMRRFTEQRSPDSQDEIWLVEHPAVFTQGQAGKAEHLLVPGDIPVVQTDRGGQVTYHGPGQLVAYLLLDVRRLGFGVRELVSRIEQTLIELLASYGVSAAAKPDAPGVYVDGAKIASLGLRIRNGRSFHGLALNVDMDLAPFRRINPCGYAGLAMTQLRDLAGPIELDEVRTRLRGQLVKHLDYAEQTTLTGGID</sequence>
<keyword id="KW-0012">Acyltransferase</keyword>
<keyword id="KW-0963">Cytoplasm</keyword>
<keyword id="KW-0808">Transferase</keyword>